<keyword id="KW-0489">Methyltransferase</keyword>
<keyword id="KW-0949">S-adenosyl-L-methionine</keyword>
<keyword id="KW-0808">Transferase</keyword>
<keyword id="KW-0819">tRNA processing</keyword>
<protein>
    <recommendedName>
        <fullName evidence="2">tRNA (guanine-N(7)-)-methyltransferase</fullName>
        <ecNumber evidence="2">2.1.1.33</ecNumber>
    </recommendedName>
    <alternativeName>
        <fullName evidence="2">tRNA (guanine(46)-N(7))-methyltransferase</fullName>
    </alternativeName>
    <alternativeName>
        <fullName evidence="2">tRNA(m7G46)-methyltransferase</fullName>
    </alternativeName>
</protein>
<organism>
    <name type="scientific">Bartonella quintana (strain Toulouse)</name>
    <name type="common">Rochalimaea quintana</name>
    <dbReference type="NCBI Taxonomy" id="283165"/>
    <lineage>
        <taxon>Bacteria</taxon>
        <taxon>Pseudomonadati</taxon>
        <taxon>Pseudomonadota</taxon>
        <taxon>Alphaproteobacteria</taxon>
        <taxon>Hyphomicrobiales</taxon>
        <taxon>Bartonellaceae</taxon>
        <taxon>Bartonella</taxon>
    </lineage>
</organism>
<evidence type="ECO:0000250" key="1"/>
<evidence type="ECO:0000255" key="2">
    <source>
        <dbReference type="HAMAP-Rule" id="MF_01057"/>
    </source>
</evidence>
<accession>Q6G0N8</accession>
<reference key="1">
    <citation type="journal article" date="2004" name="Proc. Natl. Acad. Sci. U.S.A.">
        <title>The louse-borne human pathogen Bartonella quintana is a genomic derivative of the zoonotic agent Bartonella henselae.</title>
        <authorList>
            <person name="Alsmark U.C.M."/>
            <person name="Frank A.C."/>
            <person name="Karlberg E.O."/>
            <person name="Legault B.-A."/>
            <person name="Ardell D.H."/>
            <person name="Canbaeck B."/>
            <person name="Eriksson A.-S."/>
            <person name="Naeslund A.K."/>
            <person name="Handley S.A."/>
            <person name="Huvet M."/>
            <person name="La Scola B."/>
            <person name="Holmberg M."/>
            <person name="Andersson S.G.E."/>
        </authorList>
    </citation>
    <scope>NUCLEOTIDE SEQUENCE [LARGE SCALE GENOMIC DNA]</scope>
    <source>
        <strain>Toulouse</strain>
    </source>
</reference>
<comment type="function">
    <text evidence="2">Catalyzes the formation of N(7)-methylguanine at position 46 (m7G46) in tRNA.</text>
</comment>
<comment type="catalytic activity">
    <reaction evidence="2">
        <text>guanosine(46) in tRNA + S-adenosyl-L-methionine = N(7)-methylguanosine(46) in tRNA + S-adenosyl-L-homocysteine</text>
        <dbReference type="Rhea" id="RHEA:42708"/>
        <dbReference type="Rhea" id="RHEA-COMP:10188"/>
        <dbReference type="Rhea" id="RHEA-COMP:10189"/>
        <dbReference type="ChEBI" id="CHEBI:57856"/>
        <dbReference type="ChEBI" id="CHEBI:59789"/>
        <dbReference type="ChEBI" id="CHEBI:74269"/>
        <dbReference type="ChEBI" id="CHEBI:74480"/>
        <dbReference type="EC" id="2.1.1.33"/>
    </reaction>
</comment>
<comment type="pathway">
    <text evidence="2">tRNA modification; N(7)-methylguanine-tRNA biosynthesis.</text>
</comment>
<comment type="similarity">
    <text evidence="2">Belongs to the class I-like SAM-binding methyltransferase superfamily. TrmB family.</text>
</comment>
<sequence>MIDHKVHLSEAFFGRRKGKRLRNSQLARIKMLLPTLKIDLNNSAPPDLTSLFPSKVREVRLEIGFGGGEHLLHEMEHFPQTGFIGVEPFINGMAKMLMSLEQHKQHQNHLRLYDDDATRLLDWLPNASLDGIDLLYPDPWPKKKHWKRRFINMKNLNRVARVLKIGKKFRFATDIDSYANWTLYYFTHHHSFEWEAENLKDWKTPYPLWPGTRYEEKALREGRTPTYLTFIKK</sequence>
<proteinExistence type="inferred from homology"/>
<name>TRMB_BARQU</name>
<feature type="chain" id="PRO_0000171298" description="tRNA (guanine-N(7)-)-methyltransferase">
    <location>
        <begin position="1"/>
        <end position="233"/>
    </location>
</feature>
<feature type="active site" evidence="1">
    <location>
        <position position="138"/>
    </location>
</feature>
<feature type="binding site" evidence="2">
    <location>
        <position position="62"/>
    </location>
    <ligand>
        <name>S-adenosyl-L-methionine</name>
        <dbReference type="ChEBI" id="CHEBI:59789"/>
    </ligand>
</feature>
<feature type="binding site" evidence="2">
    <location>
        <position position="87"/>
    </location>
    <ligand>
        <name>S-adenosyl-L-methionine</name>
        <dbReference type="ChEBI" id="CHEBI:59789"/>
    </ligand>
</feature>
<feature type="binding site" evidence="2">
    <location>
        <position position="116"/>
    </location>
    <ligand>
        <name>S-adenosyl-L-methionine</name>
        <dbReference type="ChEBI" id="CHEBI:59789"/>
    </ligand>
</feature>
<feature type="binding site" evidence="2">
    <location>
        <position position="138"/>
    </location>
    <ligand>
        <name>S-adenosyl-L-methionine</name>
        <dbReference type="ChEBI" id="CHEBI:59789"/>
    </ligand>
</feature>
<feature type="binding site" evidence="2">
    <location>
        <position position="142"/>
    </location>
    <ligand>
        <name>substrate</name>
    </ligand>
</feature>
<feature type="binding site" evidence="2">
    <location>
        <position position="174"/>
    </location>
    <ligand>
        <name>substrate</name>
    </ligand>
</feature>
<feature type="binding site" evidence="2">
    <location>
        <begin position="212"/>
        <end position="215"/>
    </location>
    <ligand>
        <name>substrate</name>
    </ligand>
</feature>
<dbReference type="EC" id="2.1.1.33" evidence="2"/>
<dbReference type="EMBL" id="BX897700">
    <property type="protein sequence ID" value="CAF25710.1"/>
    <property type="molecule type" value="Genomic_DNA"/>
</dbReference>
<dbReference type="RefSeq" id="WP_011179025.1">
    <property type="nucleotide sequence ID" value="NC_005955.1"/>
</dbReference>
<dbReference type="SMR" id="Q6G0N8"/>
<dbReference type="KEGG" id="bqu:BQ02070"/>
<dbReference type="eggNOG" id="COG0220">
    <property type="taxonomic scope" value="Bacteria"/>
</dbReference>
<dbReference type="HOGENOM" id="CLU_050910_0_3_5"/>
<dbReference type="OrthoDB" id="9802090at2"/>
<dbReference type="UniPathway" id="UPA00989"/>
<dbReference type="Proteomes" id="UP000000597">
    <property type="component" value="Chromosome"/>
</dbReference>
<dbReference type="GO" id="GO:0043527">
    <property type="term" value="C:tRNA methyltransferase complex"/>
    <property type="evidence" value="ECO:0007669"/>
    <property type="project" value="TreeGrafter"/>
</dbReference>
<dbReference type="GO" id="GO:0008176">
    <property type="term" value="F:tRNA (guanine(46)-N7)-methyltransferase activity"/>
    <property type="evidence" value="ECO:0007669"/>
    <property type="project" value="UniProtKB-UniRule"/>
</dbReference>
<dbReference type="Gene3D" id="3.40.50.150">
    <property type="entry name" value="Vaccinia Virus protein VP39"/>
    <property type="match status" value="1"/>
</dbReference>
<dbReference type="HAMAP" id="MF_01057">
    <property type="entry name" value="tRNA_methyltr_TrmB"/>
    <property type="match status" value="1"/>
</dbReference>
<dbReference type="InterPro" id="IPR029063">
    <property type="entry name" value="SAM-dependent_MTases_sf"/>
</dbReference>
<dbReference type="InterPro" id="IPR003358">
    <property type="entry name" value="tRNA_(Gua-N-7)_MeTrfase_Trmb"/>
</dbReference>
<dbReference type="InterPro" id="IPR055361">
    <property type="entry name" value="tRNA_methyltr_TrmB_bact"/>
</dbReference>
<dbReference type="PANTHER" id="PTHR23417">
    <property type="entry name" value="3-DEOXY-D-MANNO-OCTULOSONIC-ACID TRANSFERASE/TRNA GUANINE-N 7 - -METHYLTRANSFERASE"/>
    <property type="match status" value="1"/>
</dbReference>
<dbReference type="PANTHER" id="PTHR23417:SF14">
    <property type="entry name" value="PENTACOTRIPEPTIDE-REPEAT REGION OF PRORP DOMAIN-CONTAINING PROTEIN"/>
    <property type="match status" value="1"/>
</dbReference>
<dbReference type="Pfam" id="PF02390">
    <property type="entry name" value="Methyltransf_4"/>
    <property type="match status" value="1"/>
</dbReference>
<dbReference type="SUPFAM" id="SSF53335">
    <property type="entry name" value="S-adenosyl-L-methionine-dependent methyltransferases"/>
    <property type="match status" value="1"/>
</dbReference>
<dbReference type="PROSITE" id="PS51625">
    <property type="entry name" value="SAM_MT_TRMB"/>
    <property type="match status" value="1"/>
</dbReference>
<gene>
    <name evidence="2" type="primary">trmB</name>
    <name type="ordered locus">BQ02070</name>
</gene>